<protein>
    <recommendedName>
        <fullName>Protein transport protein SEC23-1</fullName>
    </recommendedName>
</protein>
<reference key="1">
    <citation type="journal article" date="2004" name="Nature">
        <title>Genome evolution in yeasts.</title>
        <authorList>
            <person name="Dujon B."/>
            <person name="Sherman D."/>
            <person name="Fischer G."/>
            <person name="Durrens P."/>
            <person name="Casaregola S."/>
            <person name="Lafontaine I."/>
            <person name="de Montigny J."/>
            <person name="Marck C."/>
            <person name="Neuveglise C."/>
            <person name="Talla E."/>
            <person name="Goffard N."/>
            <person name="Frangeul L."/>
            <person name="Aigle M."/>
            <person name="Anthouard V."/>
            <person name="Babour A."/>
            <person name="Barbe V."/>
            <person name="Barnay S."/>
            <person name="Blanchin S."/>
            <person name="Beckerich J.-M."/>
            <person name="Beyne E."/>
            <person name="Bleykasten C."/>
            <person name="Boisrame A."/>
            <person name="Boyer J."/>
            <person name="Cattolico L."/>
            <person name="Confanioleri F."/>
            <person name="de Daruvar A."/>
            <person name="Despons L."/>
            <person name="Fabre E."/>
            <person name="Fairhead C."/>
            <person name="Ferry-Dumazet H."/>
            <person name="Groppi A."/>
            <person name="Hantraye F."/>
            <person name="Hennequin C."/>
            <person name="Jauniaux N."/>
            <person name="Joyet P."/>
            <person name="Kachouri R."/>
            <person name="Kerrest A."/>
            <person name="Koszul R."/>
            <person name="Lemaire M."/>
            <person name="Lesur I."/>
            <person name="Ma L."/>
            <person name="Muller H."/>
            <person name="Nicaud J.-M."/>
            <person name="Nikolski M."/>
            <person name="Oztas S."/>
            <person name="Ozier-Kalogeropoulos O."/>
            <person name="Pellenz S."/>
            <person name="Potier S."/>
            <person name="Richard G.-F."/>
            <person name="Straub M.-L."/>
            <person name="Suleau A."/>
            <person name="Swennen D."/>
            <person name="Tekaia F."/>
            <person name="Wesolowski-Louvel M."/>
            <person name="Westhof E."/>
            <person name="Wirth B."/>
            <person name="Zeniou-Meyer M."/>
            <person name="Zivanovic Y."/>
            <person name="Bolotin-Fukuhara M."/>
            <person name="Thierry A."/>
            <person name="Bouchier C."/>
            <person name="Caudron B."/>
            <person name="Scarpelli C."/>
            <person name="Gaillardin C."/>
            <person name="Weissenbach J."/>
            <person name="Wincker P."/>
            <person name="Souciet J.-L."/>
        </authorList>
    </citation>
    <scope>NUCLEOTIDE SEQUENCE [LARGE SCALE GENOMIC DNA]</scope>
    <source>
        <strain>ATCC 2001 / BCRC 20586 / JCM 3761 / NBRC 0622 / NRRL Y-65 / CBS 138</strain>
    </source>
</reference>
<proteinExistence type="inferred from homology"/>
<accession>Q6FSK3</accession>
<dbReference type="EMBL" id="CR380953">
    <property type="protein sequence ID" value="CAG59718.1"/>
    <property type="molecule type" value="Genomic_DNA"/>
</dbReference>
<dbReference type="RefSeq" id="XP_446791.1">
    <property type="nucleotide sequence ID" value="XM_446791.1"/>
</dbReference>
<dbReference type="SMR" id="Q6FSK3"/>
<dbReference type="STRING" id="284593.Q6FSK3"/>
<dbReference type="EnsemblFungi" id="CAGL0G09911g-T">
    <property type="protein sequence ID" value="CAGL0G09911g-T-p1"/>
    <property type="gene ID" value="CAGL0G09911g"/>
</dbReference>
<dbReference type="KEGG" id="cgr:2888139"/>
<dbReference type="CGD" id="CAL0129220">
    <property type="gene designation" value="CAGL0G09911g"/>
</dbReference>
<dbReference type="VEuPathDB" id="FungiDB:B1J91_G09911g"/>
<dbReference type="VEuPathDB" id="FungiDB:CAGL0G09911g"/>
<dbReference type="eggNOG" id="KOG1986">
    <property type="taxonomic scope" value="Eukaryota"/>
</dbReference>
<dbReference type="HOGENOM" id="CLU_008658_3_0_1"/>
<dbReference type="InParanoid" id="Q6FSK3"/>
<dbReference type="Proteomes" id="UP000002428">
    <property type="component" value="Chromosome G"/>
</dbReference>
<dbReference type="GO" id="GO:0030127">
    <property type="term" value="C:COPII vesicle coat"/>
    <property type="evidence" value="ECO:0007669"/>
    <property type="project" value="InterPro"/>
</dbReference>
<dbReference type="GO" id="GO:0070971">
    <property type="term" value="C:endoplasmic reticulum exit site"/>
    <property type="evidence" value="ECO:0007669"/>
    <property type="project" value="TreeGrafter"/>
</dbReference>
<dbReference type="GO" id="GO:0005789">
    <property type="term" value="C:endoplasmic reticulum membrane"/>
    <property type="evidence" value="ECO:0007669"/>
    <property type="project" value="UniProtKB-SubCell"/>
</dbReference>
<dbReference type="GO" id="GO:0000139">
    <property type="term" value="C:Golgi membrane"/>
    <property type="evidence" value="ECO:0007669"/>
    <property type="project" value="UniProtKB-SubCell"/>
</dbReference>
<dbReference type="GO" id="GO:0005096">
    <property type="term" value="F:GTPase activator activity"/>
    <property type="evidence" value="ECO:0007669"/>
    <property type="project" value="TreeGrafter"/>
</dbReference>
<dbReference type="GO" id="GO:0008270">
    <property type="term" value="F:zinc ion binding"/>
    <property type="evidence" value="ECO:0007669"/>
    <property type="project" value="InterPro"/>
</dbReference>
<dbReference type="GO" id="GO:0090110">
    <property type="term" value="P:COPII-coated vesicle cargo loading"/>
    <property type="evidence" value="ECO:0007669"/>
    <property type="project" value="TreeGrafter"/>
</dbReference>
<dbReference type="GO" id="GO:0006886">
    <property type="term" value="P:intracellular protein transport"/>
    <property type="evidence" value="ECO:0007669"/>
    <property type="project" value="InterPro"/>
</dbReference>
<dbReference type="CDD" id="cd11287">
    <property type="entry name" value="Sec23_C"/>
    <property type="match status" value="1"/>
</dbReference>
<dbReference type="FunFam" id="1.20.120.730:FF:000005">
    <property type="entry name" value="Protein transport protein SEC23"/>
    <property type="match status" value="1"/>
</dbReference>
<dbReference type="FunFam" id="2.30.30.380:FF:000001">
    <property type="entry name" value="Protein transport protein SEC23"/>
    <property type="match status" value="1"/>
</dbReference>
<dbReference type="FunFam" id="3.40.20.10:FF:000006">
    <property type="entry name" value="Protein transport protein SEC23"/>
    <property type="match status" value="1"/>
</dbReference>
<dbReference type="FunFam" id="3.40.50.410:FF:000008">
    <property type="entry name" value="Protein transport protein SEC23"/>
    <property type="match status" value="1"/>
</dbReference>
<dbReference type="Gene3D" id="2.60.40.1670">
    <property type="entry name" value="beta-sandwich domain of Sec23/24"/>
    <property type="match status" value="1"/>
</dbReference>
<dbReference type="Gene3D" id="1.20.120.730">
    <property type="entry name" value="Sec23/Sec24 helical domain"/>
    <property type="match status" value="1"/>
</dbReference>
<dbReference type="Gene3D" id="3.40.20.10">
    <property type="entry name" value="Severin"/>
    <property type="match status" value="1"/>
</dbReference>
<dbReference type="Gene3D" id="3.40.50.410">
    <property type="entry name" value="von Willebrand factor, type A domain"/>
    <property type="match status" value="1"/>
</dbReference>
<dbReference type="Gene3D" id="2.30.30.380">
    <property type="entry name" value="Zn-finger domain of Sec23/24"/>
    <property type="match status" value="1"/>
</dbReference>
<dbReference type="InterPro" id="IPR029006">
    <property type="entry name" value="ADF-H/Gelsolin-like_dom_sf"/>
</dbReference>
<dbReference type="InterPro" id="IPR007123">
    <property type="entry name" value="Gelsolin-like_dom"/>
</dbReference>
<dbReference type="InterPro" id="IPR036180">
    <property type="entry name" value="Gelsolin-like_dom_sf"/>
</dbReference>
<dbReference type="InterPro" id="IPR037364">
    <property type="entry name" value="Sec23"/>
</dbReference>
<dbReference type="InterPro" id="IPR006900">
    <property type="entry name" value="Sec23/24_helical_dom"/>
</dbReference>
<dbReference type="InterPro" id="IPR036175">
    <property type="entry name" value="Sec23/24_helical_dom_sf"/>
</dbReference>
<dbReference type="InterPro" id="IPR006896">
    <property type="entry name" value="Sec23/24_trunk_dom"/>
</dbReference>
<dbReference type="InterPro" id="IPR012990">
    <property type="entry name" value="Sec23_24_beta_S"/>
</dbReference>
<dbReference type="InterPro" id="IPR037550">
    <property type="entry name" value="Sec23_C"/>
</dbReference>
<dbReference type="InterPro" id="IPR036465">
    <property type="entry name" value="vWFA_dom_sf"/>
</dbReference>
<dbReference type="InterPro" id="IPR006895">
    <property type="entry name" value="Znf_Sec23_Sec24"/>
</dbReference>
<dbReference type="InterPro" id="IPR036174">
    <property type="entry name" value="Znf_Sec23_Sec24_sf"/>
</dbReference>
<dbReference type="PANTHER" id="PTHR11141">
    <property type="entry name" value="PROTEIN TRANSPORT PROTEIN SEC23"/>
    <property type="match status" value="1"/>
</dbReference>
<dbReference type="PANTHER" id="PTHR11141:SF0">
    <property type="entry name" value="PROTEIN TRANSPORT PROTEIN SEC23"/>
    <property type="match status" value="1"/>
</dbReference>
<dbReference type="Pfam" id="PF00626">
    <property type="entry name" value="Gelsolin"/>
    <property type="match status" value="1"/>
</dbReference>
<dbReference type="Pfam" id="PF08033">
    <property type="entry name" value="Sec23_BS"/>
    <property type="match status" value="1"/>
</dbReference>
<dbReference type="Pfam" id="PF04815">
    <property type="entry name" value="Sec23_helical"/>
    <property type="match status" value="1"/>
</dbReference>
<dbReference type="Pfam" id="PF04811">
    <property type="entry name" value="Sec23_trunk"/>
    <property type="match status" value="1"/>
</dbReference>
<dbReference type="Pfam" id="PF04810">
    <property type="entry name" value="zf-Sec23_Sec24"/>
    <property type="match status" value="1"/>
</dbReference>
<dbReference type="SUPFAM" id="SSF81995">
    <property type="entry name" value="beta-sandwich domain of Sec23/24"/>
    <property type="match status" value="1"/>
</dbReference>
<dbReference type="SUPFAM" id="SSF82754">
    <property type="entry name" value="C-terminal, gelsolin-like domain of Sec23/24"/>
    <property type="match status" value="1"/>
</dbReference>
<dbReference type="SUPFAM" id="SSF81811">
    <property type="entry name" value="Helical domain of Sec23/24"/>
    <property type="match status" value="1"/>
</dbReference>
<dbReference type="SUPFAM" id="SSF53300">
    <property type="entry name" value="vWA-like"/>
    <property type="match status" value="1"/>
</dbReference>
<dbReference type="SUPFAM" id="SSF82919">
    <property type="entry name" value="Zn-finger domain of Sec23/24"/>
    <property type="match status" value="1"/>
</dbReference>
<sequence>MDFDTNEDLNGVRFAWNVFPSSKTDAMQNVVPLGCMYTPLKEIEGLNVVDYNPVVCAGPHCKAILNPYCMIDPRSNSWTCSICKSRNHLPTQYHNLSQENIPIELQQTTVEYLTTKPVQVPPIFLFVVDITTEPDNLQALKESITASLSLLPANALIGLITYGKVVQLHDFSNDTIARCNVFKGDKDYQLEPLVEMLTGQKMTGSIPNTQVTPFSLNRFFLPLEQIEFRFIQVLESLSQDEWSVKPGERPLRATGSALNIASLLLQGCYKNNAARIIVFSSGPDTINPGLIVDLELKNPIRSHHDIDSGNAVHYKKAMKYYNTLADRISENGHTVDLFSGCYDQIGMSEMRKLTDRTGGVLLLTDSFSTAIFKQSYLRLFAKDEDDYMKMSFSAKFQVKSSKELKVQGLIGHASAVKKTSATNISDTTIGIGGTSTWTMGSLLPQHTYAVFFDIASNGPTPVTGDNQQLAYIQFITNYQHSSGTIRTRVTTVANQLQSFGSPLIAASFDQEAAAVLISRIAVHKAETEEGPDVIKWIDRTLIKLCQKYADYNKNDPSSFRLAGNFSLFPQFMYYLRRSQFLSVFNNSPDETAFYRHIFTREDTTNSLIMIQPTLTSFSMESEPEPVLLDSLSVKADTILLLDTFFYILIYHGETIAQWRKAGYQDDPQYADFKELLEEPKLEAAELLVDRFPLPRFIDTEAGGSQARFLLSKLNPSDSYQNMNSAGATIVLTDDISLQNFMLHLQQSVVNTQK</sequence>
<name>SC231_CANGA</name>
<feature type="chain" id="PRO_0000295456" description="Protein transport protein SEC23-1">
    <location>
        <begin position="1"/>
        <end position="753"/>
    </location>
</feature>
<feature type="binding site" evidence="1">
    <location>
        <position position="56"/>
    </location>
    <ligand>
        <name>Zn(2+)</name>
        <dbReference type="ChEBI" id="CHEBI:29105"/>
    </ligand>
</feature>
<feature type="binding site" evidence="1">
    <location>
        <position position="61"/>
    </location>
    <ligand>
        <name>Zn(2+)</name>
        <dbReference type="ChEBI" id="CHEBI:29105"/>
    </ligand>
</feature>
<feature type="binding site" evidence="1">
    <location>
        <position position="80"/>
    </location>
    <ligand>
        <name>Zn(2+)</name>
        <dbReference type="ChEBI" id="CHEBI:29105"/>
    </ligand>
</feature>
<feature type="binding site" evidence="1">
    <location>
        <position position="83"/>
    </location>
    <ligand>
        <name>Zn(2+)</name>
        <dbReference type="ChEBI" id="CHEBI:29105"/>
    </ligand>
</feature>
<keyword id="KW-0963">Cytoplasm</keyword>
<keyword id="KW-0968">Cytoplasmic vesicle</keyword>
<keyword id="KW-0256">Endoplasmic reticulum</keyword>
<keyword id="KW-0931">ER-Golgi transport</keyword>
<keyword id="KW-0333">Golgi apparatus</keyword>
<keyword id="KW-0472">Membrane</keyword>
<keyword id="KW-0479">Metal-binding</keyword>
<keyword id="KW-0653">Protein transport</keyword>
<keyword id="KW-1185">Reference proteome</keyword>
<keyword id="KW-0813">Transport</keyword>
<keyword id="KW-0862">Zinc</keyword>
<evidence type="ECO:0000250" key="1"/>
<evidence type="ECO:0000305" key="2"/>
<gene>
    <name type="primary">SEC231</name>
    <name type="ordered locus">CAGL0G09911g</name>
</gene>
<comment type="function">
    <text evidence="1">Component of the coat protein complex II (COPII) which promotes the formation of transport vesicles from the endoplasmic reticulum (ER). The coat has two main functions, the physical deformation of the endoplasmic reticulum membrane into vesicles and the selection of cargo molecules (By similarity).</text>
</comment>
<comment type="subunit">
    <text evidence="1">The COPII coat is composed of at least 5 proteins: the SEC23/24 complex, the SEC13/31 complex, and the protein SAR1.</text>
</comment>
<comment type="subcellular location">
    <subcellularLocation>
        <location evidence="1">Cytoplasm</location>
    </subcellularLocation>
    <subcellularLocation>
        <location evidence="1">Cytoplasmic vesicle</location>
        <location evidence="1">COPII-coated vesicle membrane</location>
        <topology evidence="1">Peripheral membrane protein</topology>
        <orientation evidence="1">Cytoplasmic side</orientation>
    </subcellularLocation>
    <subcellularLocation>
        <location evidence="1">Endoplasmic reticulum membrane</location>
        <topology evidence="1">Peripheral membrane protein</topology>
        <orientation evidence="1">Cytoplasmic side</orientation>
    </subcellularLocation>
    <subcellularLocation>
        <location evidence="1">Golgi apparatus membrane</location>
        <topology evidence="1">Peripheral membrane protein</topology>
        <orientation evidence="1">Cytoplasmic side</orientation>
    </subcellularLocation>
</comment>
<comment type="similarity">
    <text evidence="2">Belongs to the SEC23/SEC24 family. SEC23 subfamily.</text>
</comment>
<organism>
    <name type="scientific">Candida glabrata (strain ATCC 2001 / BCRC 20586 / JCM 3761 / NBRC 0622 / NRRL Y-65 / CBS 138)</name>
    <name type="common">Yeast</name>
    <name type="synonym">Nakaseomyces glabratus</name>
    <dbReference type="NCBI Taxonomy" id="284593"/>
    <lineage>
        <taxon>Eukaryota</taxon>
        <taxon>Fungi</taxon>
        <taxon>Dikarya</taxon>
        <taxon>Ascomycota</taxon>
        <taxon>Saccharomycotina</taxon>
        <taxon>Saccharomycetes</taxon>
        <taxon>Saccharomycetales</taxon>
        <taxon>Saccharomycetaceae</taxon>
        <taxon>Nakaseomyces</taxon>
    </lineage>
</organism>